<protein>
    <recommendedName>
        <fullName evidence="1">Deoxyhypusine synthase-like protein</fullName>
        <ecNumber evidence="1">2.5.-.-</ecNumber>
    </recommendedName>
</protein>
<comment type="similarity">
    <text evidence="1">Belongs to the deoxyhypusine synthase family.</text>
</comment>
<comment type="sequence caution" evidence="2">
    <conflict type="erroneous initiation">
        <sequence resource="EMBL-CDS" id="ABS77921"/>
    </conflict>
</comment>
<organism>
    <name type="scientific">Coxiella burnetii (strain Dugway 5J108-111)</name>
    <dbReference type="NCBI Taxonomy" id="434922"/>
    <lineage>
        <taxon>Bacteria</taxon>
        <taxon>Pseudomonadati</taxon>
        <taxon>Pseudomonadota</taxon>
        <taxon>Gammaproteobacteria</taxon>
        <taxon>Legionellales</taxon>
        <taxon>Coxiellaceae</taxon>
        <taxon>Coxiella</taxon>
    </lineage>
</organism>
<gene>
    <name type="ordered locus">CBUD_0732</name>
</gene>
<reference key="1">
    <citation type="journal article" date="2009" name="Infect. Immun.">
        <title>Comparative genomics reveal extensive transposon-mediated genomic plasticity and diversity among potential effector proteins within the genus Coxiella.</title>
        <authorList>
            <person name="Beare P.A."/>
            <person name="Unsworth N."/>
            <person name="Andoh M."/>
            <person name="Voth D.E."/>
            <person name="Omsland A."/>
            <person name="Gilk S.D."/>
            <person name="Williams K.P."/>
            <person name="Sobral B.W."/>
            <person name="Kupko J.J. III"/>
            <person name="Porcella S.F."/>
            <person name="Samuel J.E."/>
            <person name="Heinzen R.A."/>
        </authorList>
    </citation>
    <scope>NUCLEOTIDE SEQUENCE [LARGE SCALE GENOMIC DNA]</scope>
    <source>
        <strain>Dugway 5J108-111</strain>
    </source>
</reference>
<name>DHSL_COXBN</name>
<feature type="chain" id="PRO_1000082696" description="Deoxyhypusine synthase-like protein">
    <location>
        <begin position="1"/>
        <end position="352"/>
    </location>
</feature>
<keyword id="KW-0808">Transferase</keyword>
<dbReference type="EC" id="2.5.-.-" evidence="1"/>
<dbReference type="EMBL" id="CP000733">
    <property type="protein sequence ID" value="ABS77921.2"/>
    <property type="status" value="ALT_INIT"/>
    <property type="molecule type" value="Genomic_DNA"/>
</dbReference>
<dbReference type="SMR" id="A9KDQ8"/>
<dbReference type="KEGG" id="cbd:CBUD_0732"/>
<dbReference type="HOGENOM" id="CLU_039781_1_0_6"/>
<dbReference type="Proteomes" id="UP000008555">
    <property type="component" value="Chromosome"/>
</dbReference>
<dbReference type="GO" id="GO:0005737">
    <property type="term" value="C:cytoplasm"/>
    <property type="evidence" value="ECO:0007669"/>
    <property type="project" value="TreeGrafter"/>
</dbReference>
<dbReference type="GO" id="GO:0034038">
    <property type="term" value="F:deoxyhypusine synthase activity"/>
    <property type="evidence" value="ECO:0007669"/>
    <property type="project" value="TreeGrafter"/>
</dbReference>
<dbReference type="FunFam" id="3.40.910.10:FF:000006">
    <property type="entry name" value="Probable deoxyhypusine synthase"/>
    <property type="match status" value="1"/>
</dbReference>
<dbReference type="Gene3D" id="3.40.910.10">
    <property type="entry name" value="Deoxyhypusine synthase"/>
    <property type="match status" value="1"/>
</dbReference>
<dbReference type="HAMAP" id="MF_00640">
    <property type="entry name" value="DHS_like"/>
    <property type="match status" value="1"/>
</dbReference>
<dbReference type="InterPro" id="IPR002773">
    <property type="entry name" value="Deoxyhypusine_synthase"/>
</dbReference>
<dbReference type="InterPro" id="IPR023496">
    <property type="entry name" value="Deoxyhypusine_synthase-like"/>
</dbReference>
<dbReference type="InterPro" id="IPR036982">
    <property type="entry name" value="Deoxyhypusine_synthase_sf"/>
</dbReference>
<dbReference type="InterPro" id="IPR029035">
    <property type="entry name" value="DHS-like_NAD/FAD-binding_dom"/>
</dbReference>
<dbReference type="NCBIfam" id="NF002699">
    <property type="entry name" value="PRK02492.1"/>
    <property type="match status" value="1"/>
</dbReference>
<dbReference type="PANTHER" id="PTHR11703">
    <property type="entry name" value="DEOXYHYPUSINE SYNTHASE"/>
    <property type="match status" value="1"/>
</dbReference>
<dbReference type="PANTHER" id="PTHR11703:SF2">
    <property type="entry name" value="DEOXYHYPUSINE SYNTHASE-LIKE PROTEIN"/>
    <property type="match status" value="1"/>
</dbReference>
<dbReference type="Pfam" id="PF01916">
    <property type="entry name" value="DS"/>
    <property type="match status" value="1"/>
</dbReference>
<dbReference type="SUPFAM" id="SSF52467">
    <property type="entry name" value="DHS-like NAD/FAD-binding domain"/>
    <property type="match status" value="1"/>
</dbReference>
<sequence>MKNKNLSMPSLKEKLLQETVEHIDITRFDARPIIDAMDHMSFTSRDLARATQIFNRMLQDEQCSIILSLAGSTSAGGCMKLYADLVKYNMVDAIVATGASIVDMDFFEALGFRHYQGSPAVEDRQLRDLYIDRIYDTYIDEEDLQRCDHTIYEIANSLEPRPYSSREFIHHMGAYLAQGKAKKEESLVQLAYEHDVPIFCPAFTDSSAGFGLVLHQVKNPDRHLTIDSIRDFRELTDIKIKAGTTGLLMIGGGVPKNFVQDTVVCAEVIGKTVDMHKYAIQITVADVRDGACSSSTLKEACSWGKVDTAYEQMVYAEATSGLPLLASDAYHRGYWKDRSPRQYANLFKSESK</sequence>
<accession>A9KDQ8</accession>
<proteinExistence type="inferred from homology"/>
<evidence type="ECO:0000255" key="1">
    <source>
        <dbReference type="HAMAP-Rule" id="MF_00640"/>
    </source>
</evidence>
<evidence type="ECO:0000305" key="2"/>